<name>AGO1_SCHPO</name>
<feature type="chain" id="PRO_0000194065" description="Protein argonaute">
    <location>
        <begin position="1"/>
        <end position="834"/>
    </location>
</feature>
<feature type="domain" description="PAZ" evidence="1">
    <location>
        <begin position="210"/>
        <end position="326"/>
    </location>
</feature>
<feature type="domain" description="Piwi" evidence="2">
    <location>
        <begin position="500"/>
        <end position="799"/>
    </location>
</feature>
<feature type="mutagenesis site" description="Decreased association with siRNAs. Normal histone H3 'K-10' methylation." evidence="12">
    <original>F</original>
    <variation>A</variation>
    <location>
        <position position="276"/>
    </location>
</feature>
<feature type="mutagenesis site" description="Lower target RNA cleavage activity. Up-regulated centromeric transcripts from the dg and dh heterochromatic repeats. Defective for centromeric heterochromatin assembly and silencing. Decreased association with siRNAs." evidence="11 12">
    <original>D</original>
    <variation>A</variation>
    <location>
        <position position="580"/>
    </location>
</feature>
<feature type="mutagenesis site" description="Lower target RNA cleavage activity. Up-regulated centromeric transcripts from the dg and dh heterochromatic repeats." evidence="11">
    <original>D</original>
    <variation>A</variation>
    <location>
        <position position="651"/>
    </location>
</feature>
<feature type="mutagenesis site" description="Up-regulated centromeric transcripts from the dg and dh heterochromatic repeats. Reduced siRNA corresponding to heterochromatic repeats." evidence="11">
    <original>H</original>
    <variation>A</variation>
    <location>
        <position position="788"/>
    </location>
</feature>
<organism>
    <name type="scientific">Schizosaccharomyces pombe (strain 972 / ATCC 24843)</name>
    <name type="common">Fission yeast</name>
    <dbReference type="NCBI Taxonomy" id="284812"/>
    <lineage>
        <taxon>Eukaryota</taxon>
        <taxon>Fungi</taxon>
        <taxon>Dikarya</taxon>
        <taxon>Ascomycota</taxon>
        <taxon>Taphrinomycotina</taxon>
        <taxon>Schizosaccharomycetes</taxon>
        <taxon>Schizosaccharomycetales</taxon>
        <taxon>Schizosaccharomycetaceae</taxon>
        <taxon>Schizosaccharomyces</taxon>
    </lineage>
</organism>
<proteinExistence type="evidence at protein level"/>
<comment type="function">
    <text evidence="3 4 5 6 7 8 9 10 11 12">Required for G1 arrest and mating in response to nitrogen starvation. Ago1 regulation of cytokinesis and cell cycle checkpoints occurs downstream of dcr1. Required, indirectly, for regulated hyperphosphorylation of cdc2. Has a role in the RNA interference (RNAi) pathway which is important for heterochromatin formation, accurate chromosome segregation, centromere cohesion and telomere function during mitosis and meiosis. Required for silencing at the centromeres and for initiation of transcriptionally silent heterochromatin at the mating type locus. Promotes histone H3K9 methylation necessary for centromere function. Required for recruitment of swi6 and cohesin to an ectopic dg repeat. A member of the RNA-induced transcriptional silencing (RITS) complex which is involved in the biosynthesis of dsRNA from primer siRNAs provided by the RNA-directed RNA polymerase (RDRC) complex. Has ribonuclease H-like cleavage (slicing) activity towards target messages complementary to siRNA and can direct site-specific cleavage of RNA substrates via siRNA. Slicing activity is required for both post-transcriptional and transcriptional gene silencing as well as for histone H3 'Lys-10' methylation spreading, conversion of double-stranded siRNA to single-stranded siRNA and siRNA-dependent association of ago1 with chromatin. A member of the argonaute siRNA chaperone (ARC) complex which is required for histone H3K9 methylation, heterochromatin assembly and siRNA generation. The ARC complex contains mostly double-stranded siRNA.</text>
</comment>
<comment type="subunit">
    <text evidence="10 12">Ago1, chp1 and tas3 interact to form the core of the RNA-induced transcriptional silencing (RITS) complex. The RITS complex interacts with the RDRC complex via interaction between ago1 and hrr1. Clr4 has a role in mediating this interaction. Component of the argonaute siRNA chaperone (ARC) complex composed of ago1, arb1 and arb2. Interacts with arb1.</text>
</comment>
<comment type="interaction">
    <interactant intactId="EBI-422882">
        <id>O74957</id>
    </interactant>
    <interactant intactId="EBI-15624131">
        <id>Q9P7B8</id>
        <label>arb1</label>
    </interactant>
    <organismsDiffer>false</organismsDiffer>
    <experiments>5</experiments>
</comment>
<comment type="interaction">
    <interactant intactId="EBI-422882">
        <id>O74957</id>
    </interactant>
    <interactant intactId="EBI-15624152">
        <id>Q10271</id>
        <label>arb2</label>
    </interactant>
    <organismsDiffer>false</organismsDiffer>
    <experiments>4</experiments>
</comment>
<comment type="interaction">
    <interactant intactId="EBI-422882">
        <id>O74957</id>
    </interactant>
    <interactant intactId="EBI-2651917">
        <id>O94276</id>
        <label>SPBP8B7.28c</label>
    </interactant>
    <organismsDiffer>false</organismsDiffer>
    <experiments>2</experiments>
</comment>
<comment type="interaction">
    <interactant intactId="EBI-422882">
        <id>O74957</id>
    </interactant>
    <interactant intactId="EBI-423002">
        <id>O94687</id>
        <label>tas3</label>
    </interactant>
    <organismsDiffer>false</organismsDiffer>
    <experiments>5</experiments>
</comment>
<comment type="subcellular location">
    <subcellularLocation>
        <location>Cytoplasm</location>
    </subcellularLocation>
    <subcellularLocation>
        <location>Nucleus</location>
    </subcellularLocation>
    <subcellularLocation>
        <location>Chromosome</location>
        <location>Centromere</location>
    </subcellularLocation>
    <subcellularLocation>
        <location>Chromosome</location>
        <location>Telomere</location>
    </subcellularLocation>
    <text>Associates with telomeric and mating-type region heterochromatin.</text>
</comment>
<comment type="similarity">
    <text evidence="13">Belongs to the argonaute family. Ago subfamily.</text>
</comment>
<keyword id="KW-0131">Cell cycle</keyword>
<keyword id="KW-0137">Centromere</keyword>
<keyword id="KW-0158">Chromosome</keyword>
<keyword id="KW-0159">Chromosome partition</keyword>
<keyword id="KW-0963">Cytoplasm</keyword>
<keyword id="KW-0539">Nucleus</keyword>
<keyword id="KW-1185">Reference proteome</keyword>
<keyword id="KW-0943">RNA-mediated gene silencing</keyword>
<keyword id="KW-0779">Telomere</keyword>
<sequence length="834" mass="94439">MSYKPSSEIALRPGYGGLGKQITLKANFFQIISLPNETINQYHVIVGDGSRVPRKQSQLIWNSKEVKQYFGSSWMNSVYDGRSMCWSKGDIADGTIKVNIGSESHPREIEFSIQKSSKINLHTLSQFVNSKYSSDPQVLSSIMFLDLLLKKKPSETLFGFMHSFFTGENGVSLGGGVEAWKGFYQSIRPNQGFMSVNVDISSSAFWRNDSLLQILMEYTDCSNVRDLTRFDLKRLSRKFRFLKVTCQHRNNVGTDLANRVYSIEGFSSKSASDSFFVRRLNGEEQKISVAEYFLENHNVRLQYPNLPCILVKNGAMLPIEFCFVVKGQRYTAKLNSDQTANMIRFAVQRPFERVQQIDDFVHQMDWDTDPYLTQYGMKIQKKMLEVPARVLETPSIRYGGDCIERPVSGRWNLRGKRFLDPPRAPIRSWAVMCFTSTRRLPMRGIENFLQTYVQTLTSLGINFVMKKPPVLYADIRGSVEELCITLYKKAEQVGNAPPDYLFFILDKNSPEPYGSIKRVCNTMLGVPSQCAISKHILQSKPQYCANLGMKINVKVGGINCSLIPKSNPLGNVPTLILGGDVYHPGVGATGVSIASIVASVDLNGCKYTAVSRSQPRHQEVIEGMKDIVVYLLQGFRAMTKQQPQRIIYFRDGTSEGQFLSVINDELSQIKEACHSLSPKYNPKILVCTTQKRHHARFFIKNKSDGDRNGNPLPGTIIEKHVTHPYQYDFYLISHPSLQGVSVPVHYTVLHDEIQMPPDQFQTLCYNLCYVYARATSAVSLVPPVYYAHLVSNLARYQDVTADDTFVETSEASMDQEVKPLLALSSKLKTKMWYM</sequence>
<accession>O74957</accession>
<dbReference type="EMBL" id="CU329672">
    <property type="protein sequence ID" value="CAA19275.1"/>
    <property type="molecule type" value="Genomic_DNA"/>
</dbReference>
<dbReference type="PIR" id="T41568">
    <property type="entry name" value="T41568"/>
</dbReference>
<dbReference type="RefSeq" id="NP_587782.1">
    <property type="nucleotide sequence ID" value="NM_001022775.2"/>
</dbReference>
<dbReference type="SMR" id="O74957"/>
<dbReference type="BioGRID" id="275968">
    <property type="interactions" value="227"/>
</dbReference>
<dbReference type="ComplexPortal" id="CPX-25777">
    <property type="entry name" value="RITS transcriptional silencing complex"/>
</dbReference>
<dbReference type="ComplexPortal" id="CPX-25779">
    <property type="entry name" value="Argonaute siRNA chaperone complex"/>
</dbReference>
<dbReference type="DIP" id="DIP-29298N"/>
<dbReference type="FunCoup" id="O74957">
    <property type="interactions" value="266"/>
</dbReference>
<dbReference type="IntAct" id="O74957">
    <property type="interactions" value="7"/>
</dbReference>
<dbReference type="STRING" id="284812.O74957"/>
<dbReference type="PaxDb" id="4896-SPCC736.11.1"/>
<dbReference type="EnsemblFungi" id="SPCC736.11.1">
    <property type="protein sequence ID" value="SPCC736.11.1:pep"/>
    <property type="gene ID" value="SPCC736.11"/>
</dbReference>
<dbReference type="GeneID" id="2539403"/>
<dbReference type="KEGG" id="spo:2539403"/>
<dbReference type="PomBase" id="SPCC736.11">
    <property type="gene designation" value="ago1"/>
</dbReference>
<dbReference type="VEuPathDB" id="FungiDB:SPCC736.11"/>
<dbReference type="eggNOG" id="KOG1041">
    <property type="taxonomic scope" value="Eukaryota"/>
</dbReference>
<dbReference type="HOGENOM" id="CLU_004544_0_1_1"/>
<dbReference type="InParanoid" id="O74957"/>
<dbReference type="OMA" id="SQPRDYQ"/>
<dbReference type="PhylomeDB" id="O74957"/>
<dbReference type="Reactome" id="R-SPO-426486">
    <property type="pathway name" value="Small interfering RNA (siRNA) biogenesis"/>
</dbReference>
<dbReference type="Reactome" id="R-SPO-426496">
    <property type="pathway name" value="Post-transcriptional silencing by small RNAs"/>
</dbReference>
<dbReference type="Reactome" id="R-SPO-5578749">
    <property type="pathway name" value="Transcriptional regulation by small RNAs"/>
</dbReference>
<dbReference type="PRO" id="PR:O74957"/>
<dbReference type="Proteomes" id="UP000002485">
    <property type="component" value="Chromosome III"/>
</dbReference>
<dbReference type="GO" id="GO:0033167">
    <property type="term" value="C:ARC complex"/>
    <property type="evidence" value="ECO:0000314"/>
    <property type="project" value="PomBase"/>
</dbReference>
<dbReference type="GO" id="GO:0005737">
    <property type="term" value="C:cytoplasm"/>
    <property type="evidence" value="ECO:0000318"/>
    <property type="project" value="GO_Central"/>
</dbReference>
<dbReference type="GO" id="GO:0005829">
    <property type="term" value="C:cytosol"/>
    <property type="evidence" value="ECO:0007005"/>
    <property type="project" value="PomBase"/>
</dbReference>
<dbReference type="GO" id="GO:1990342">
    <property type="term" value="C:heterochromatin island"/>
    <property type="evidence" value="ECO:0000314"/>
    <property type="project" value="PomBase"/>
</dbReference>
<dbReference type="GO" id="GO:0031934">
    <property type="term" value="C:mating-type region heterochromatin"/>
    <property type="evidence" value="ECO:0000314"/>
    <property type="project" value="PomBase"/>
</dbReference>
<dbReference type="GO" id="GO:0005634">
    <property type="term" value="C:nucleus"/>
    <property type="evidence" value="ECO:0000318"/>
    <property type="project" value="GO_Central"/>
</dbReference>
<dbReference type="GO" id="GO:0005721">
    <property type="term" value="C:pericentric heterochromatin"/>
    <property type="evidence" value="ECO:0000314"/>
    <property type="project" value="PomBase"/>
</dbReference>
<dbReference type="GO" id="GO:0030958">
    <property type="term" value="C:RITS complex"/>
    <property type="evidence" value="ECO:0000314"/>
    <property type="project" value="PomBase"/>
</dbReference>
<dbReference type="GO" id="GO:0140720">
    <property type="term" value="C:subtelomeric heterochromatin"/>
    <property type="evidence" value="ECO:0000314"/>
    <property type="project" value="PomBase"/>
</dbReference>
<dbReference type="GO" id="GO:0070551">
    <property type="term" value="F:endoribonuclease activity, cleaving siRNA-paired mRNA"/>
    <property type="evidence" value="ECO:0000314"/>
    <property type="project" value="PomBase"/>
</dbReference>
<dbReference type="GO" id="GO:0030674">
    <property type="term" value="F:protein-macromolecule adaptor activity"/>
    <property type="evidence" value="ECO:0000269"/>
    <property type="project" value="PomBase"/>
</dbReference>
<dbReference type="GO" id="GO:0004521">
    <property type="term" value="F:RNA endonuclease activity"/>
    <property type="evidence" value="ECO:0000318"/>
    <property type="project" value="GO_Central"/>
</dbReference>
<dbReference type="GO" id="GO:0016891">
    <property type="term" value="F:RNA endonuclease activity, producing 5'-phosphomonoesters"/>
    <property type="evidence" value="ECO:0000314"/>
    <property type="project" value="PomBase"/>
</dbReference>
<dbReference type="GO" id="GO:0003727">
    <property type="term" value="F:single-stranded RNA binding"/>
    <property type="evidence" value="ECO:0000314"/>
    <property type="project" value="PomBase"/>
</dbReference>
<dbReference type="GO" id="GO:0035197">
    <property type="term" value="F:siRNA binding"/>
    <property type="evidence" value="ECO:0000314"/>
    <property type="project" value="PomBase"/>
</dbReference>
<dbReference type="GO" id="GO:0007059">
    <property type="term" value="P:chromosome segregation"/>
    <property type="evidence" value="ECO:0007669"/>
    <property type="project" value="UniProtKB-KW"/>
</dbReference>
<dbReference type="GO" id="GO:0033562">
    <property type="term" value="P:co-transcriptional gene silencing by RNA interference machinery"/>
    <property type="evidence" value="ECO:0000315"/>
    <property type="project" value="PomBase"/>
</dbReference>
<dbReference type="GO" id="GO:0070317">
    <property type="term" value="P:negative regulation of G0 to G1 transition"/>
    <property type="evidence" value="ECO:0000315"/>
    <property type="project" value="PomBase"/>
</dbReference>
<dbReference type="GO" id="GO:1990431">
    <property type="term" value="P:priRNA 3'-end processing"/>
    <property type="evidence" value="ECO:0000315"/>
    <property type="project" value="PomBase"/>
</dbReference>
<dbReference type="GO" id="GO:0031047">
    <property type="term" value="P:regulatory ncRNA-mediated gene silencing"/>
    <property type="evidence" value="ECO:0000318"/>
    <property type="project" value="GO_Central"/>
</dbReference>
<dbReference type="GO" id="GO:0031048">
    <property type="term" value="P:regulatory ncRNA-mediated heterochromatin formation"/>
    <property type="evidence" value="ECO:0000315"/>
    <property type="project" value="PomBase"/>
</dbReference>
<dbReference type="GO" id="GO:0030466">
    <property type="term" value="P:silent mating-type cassette heterochromatin formation"/>
    <property type="evidence" value="ECO:0000314"/>
    <property type="project" value="PomBase"/>
</dbReference>
<dbReference type="GO" id="GO:1990432">
    <property type="term" value="P:siRNA 3'-end processing"/>
    <property type="evidence" value="ECO:0000315"/>
    <property type="project" value="PomBase"/>
</dbReference>
<dbReference type="GO" id="GO:0140727">
    <property type="term" value="P:siRNA-mediated pericentric heterochromatin formation"/>
    <property type="evidence" value="ECO:0000315"/>
    <property type="project" value="PomBase"/>
</dbReference>
<dbReference type="GO" id="GO:0031509">
    <property type="term" value="P:subtelomeric heterochromatin formation"/>
    <property type="evidence" value="ECO:0000269"/>
    <property type="project" value="PomBase"/>
</dbReference>
<dbReference type="CDD" id="cd02846">
    <property type="entry name" value="PAZ_argonaute_like"/>
    <property type="match status" value="1"/>
</dbReference>
<dbReference type="CDD" id="cd04657">
    <property type="entry name" value="Piwi_ago-like"/>
    <property type="match status" value="1"/>
</dbReference>
<dbReference type="FunFam" id="3.40.50.2300:FF:000110">
    <property type="entry name" value="Argonaute 10"/>
    <property type="match status" value="1"/>
</dbReference>
<dbReference type="FunFam" id="2.170.260.10:FF:000008">
    <property type="entry name" value="Protein argonaute 7"/>
    <property type="match status" value="1"/>
</dbReference>
<dbReference type="Gene3D" id="3.40.50.2300">
    <property type="match status" value="1"/>
</dbReference>
<dbReference type="Gene3D" id="2.170.260.10">
    <property type="entry name" value="paz domain"/>
    <property type="match status" value="1"/>
</dbReference>
<dbReference type="Gene3D" id="3.30.420.10">
    <property type="entry name" value="Ribonuclease H-like superfamily/Ribonuclease H"/>
    <property type="match status" value="1"/>
</dbReference>
<dbReference type="InterPro" id="IPR014811">
    <property type="entry name" value="ArgoL1"/>
</dbReference>
<dbReference type="InterPro" id="IPR032472">
    <property type="entry name" value="ArgoL2"/>
</dbReference>
<dbReference type="InterPro" id="IPR032473">
    <property type="entry name" value="Argonaute_Mid_dom"/>
</dbReference>
<dbReference type="InterPro" id="IPR032474">
    <property type="entry name" value="Argonaute_N"/>
</dbReference>
<dbReference type="InterPro" id="IPR003100">
    <property type="entry name" value="PAZ_dom"/>
</dbReference>
<dbReference type="InterPro" id="IPR036085">
    <property type="entry name" value="PAZ_dom_sf"/>
</dbReference>
<dbReference type="InterPro" id="IPR003165">
    <property type="entry name" value="Piwi"/>
</dbReference>
<dbReference type="InterPro" id="IPR045246">
    <property type="entry name" value="Piwi_ago-like"/>
</dbReference>
<dbReference type="InterPro" id="IPR012337">
    <property type="entry name" value="RNaseH-like_sf"/>
</dbReference>
<dbReference type="InterPro" id="IPR036397">
    <property type="entry name" value="RNaseH_sf"/>
</dbReference>
<dbReference type="PANTHER" id="PTHR22891">
    <property type="entry name" value="EUKARYOTIC TRANSLATION INITIATION FACTOR 2C"/>
    <property type="match status" value="1"/>
</dbReference>
<dbReference type="Pfam" id="PF08699">
    <property type="entry name" value="ArgoL1"/>
    <property type="match status" value="1"/>
</dbReference>
<dbReference type="Pfam" id="PF16488">
    <property type="entry name" value="ArgoL2"/>
    <property type="match status" value="1"/>
</dbReference>
<dbReference type="Pfam" id="PF16487">
    <property type="entry name" value="ArgoMid"/>
    <property type="match status" value="1"/>
</dbReference>
<dbReference type="Pfam" id="PF16486">
    <property type="entry name" value="ArgoN"/>
    <property type="match status" value="1"/>
</dbReference>
<dbReference type="Pfam" id="PF02170">
    <property type="entry name" value="PAZ"/>
    <property type="match status" value="1"/>
</dbReference>
<dbReference type="Pfam" id="PF02171">
    <property type="entry name" value="Piwi"/>
    <property type="match status" value="1"/>
</dbReference>
<dbReference type="SMART" id="SM01163">
    <property type="entry name" value="DUF1785"/>
    <property type="match status" value="1"/>
</dbReference>
<dbReference type="SMART" id="SM00949">
    <property type="entry name" value="PAZ"/>
    <property type="match status" value="1"/>
</dbReference>
<dbReference type="SMART" id="SM00950">
    <property type="entry name" value="Piwi"/>
    <property type="match status" value="1"/>
</dbReference>
<dbReference type="SUPFAM" id="SSF101690">
    <property type="entry name" value="PAZ domain"/>
    <property type="match status" value="1"/>
</dbReference>
<dbReference type="SUPFAM" id="SSF53098">
    <property type="entry name" value="Ribonuclease H-like"/>
    <property type="match status" value="1"/>
</dbReference>
<dbReference type="PROSITE" id="PS50821">
    <property type="entry name" value="PAZ"/>
    <property type="match status" value="1"/>
</dbReference>
<dbReference type="PROSITE" id="PS50822">
    <property type="entry name" value="PIWI"/>
    <property type="match status" value="1"/>
</dbReference>
<gene>
    <name type="primary">ago1</name>
    <name type="synonym">csp9</name>
    <name type="ORF">SPCC736.11</name>
</gene>
<evidence type="ECO:0000255" key="1">
    <source>
        <dbReference type="PROSITE-ProRule" id="PRU00142"/>
    </source>
</evidence>
<evidence type="ECO:0000255" key="2">
    <source>
        <dbReference type="PROSITE-ProRule" id="PRU00150"/>
    </source>
</evidence>
<evidence type="ECO:0000269" key="3">
    <source>
    </source>
</evidence>
<evidence type="ECO:0000269" key="4">
    <source>
    </source>
</evidence>
<evidence type="ECO:0000269" key="5">
    <source>
    </source>
</evidence>
<evidence type="ECO:0000269" key="6">
    <source>
    </source>
</evidence>
<evidence type="ECO:0000269" key="7">
    <source>
    </source>
</evidence>
<evidence type="ECO:0000269" key="8">
    <source>
    </source>
</evidence>
<evidence type="ECO:0000269" key="9">
    <source>
    </source>
</evidence>
<evidence type="ECO:0000269" key="10">
    <source>
    </source>
</evidence>
<evidence type="ECO:0000269" key="11">
    <source>
    </source>
</evidence>
<evidence type="ECO:0000269" key="12">
    <source>
    </source>
</evidence>
<evidence type="ECO:0000305" key="13"/>
<protein>
    <recommendedName>
        <fullName>Protein argonaute</fullName>
    </recommendedName>
    <alternativeName>
        <fullName>Cell cycle control protein ago1</fullName>
    </alternativeName>
    <alternativeName>
        <fullName>Eukaryotic translation initiation factor 2C 2-like protein ago1</fullName>
    </alternativeName>
    <alternativeName>
        <fullName>PAZ Piwi domain protein ago1</fullName>
    </alternativeName>
    <alternativeName>
        <fullName>Protein slicer</fullName>
    </alternativeName>
    <alternativeName>
        <fullName>RNA interference pathway protein ago1</fullName>
    </alternativeName>
</protein>
<reference key="1">
    <citation type="journal article" date="2002" name="Nature">
        <title>The genome sequence of Schizosaccharomyces pombe.</title>
        <authorList>
            <person name="Wood V."/>
            <person name="Gwilliam R."/>
            <person name="Rajandream M.A."/>
            <person name="Lyne M.H."/>
            <person name="Lyne R."/>
            <person name="Stewart A."/>
            <person name="Sgouros J.G."/>
            <person name="Peat N."/>
            <person name="Hayles J."/>
            <person name="Baker S.G."/>
            <person name="Basham D."/>
            <person name="Bowman S."/>
            <person name="Brooks K."/>
            <person name="Brown D."/>
            <person name="Brown S."/>
            <person name="Chillingworth T."/>
            <person name="Churcher C.M."/>
            <person name="Collins M."/>
            <person name="Connor R."/>
            <person name="Cronin A."/>
            <person name="Davis P."/>
            <person name="Feltwell T."/>
            <person name="Fraser A."/>
            <person name="Gentles S."/>
            <person name="Goble A."/>
            <person name="Hamlin N."/>
            <person name="Harris D.E."/>
            <person name="Hidalgo J."/>
            <person name="Hodgson G."/>
            <person name="Holroyd S."/>
            <person name="Hornsby T."/>
            <person name="Howarth S."/>
            <person name="Huckle E.J."/>
            <person name="Hunt S."/>
            <person name="Jagels K."/>
            <person name="James K.D."/>
            <person name="Jones L."/>
            <person name="Jones M."/>
            <person name="Leather S."/>
            <person name="McDonald S."/>
            <person name="McLean J."/>
            <person name="Mooney P."/>
            <person name="Moule S."/>
            <person name="Mungall K.L."/>
            <person name="Murphy L.D."/>
            <person name="Niblett D."/>
            <person name="Odell C."/>
            <person name="Oliver K."/>
            <person name="O'Neil S."/>
            <person name="Pearson D."/>
            <person name="Quail M.A."/>
            <person name="Rabbinowitsch E."/>
            <person name="Rutherford K.M."/>
            <person name="Rutter S."/>
            <person name="Saunders D."/>
            <person name="Seeger K."/>
            <person name="Sharp S."/>
            <person name="Skelton J."/>
            <person name="Simmonds M.N."/>
            <person name="Squares R."/>
            <person name="Squares S."/>
            <person name="Stevens K."/>
            <person name="Taylor K."/>
            <person name="Taylor R.G."/>
            <person name="Tivey A."/>
            <person name="Walsh S.V."/>
            <person name="Warren T."/>
            <person name="Whitehead S."/>
            <person name="Woodward J.R."/>
            <person name="Volckaert G."/>
            <person name="Aert R."/>
            <person name="Robben J."/>
            <person name="Grymonprez B."/>
            <person name="Weltjens I."/>
            <person name="Vanstreels E."/>
            <person name="Rieger M."/>
            <person name="Schaefer M."/>
            <person name="Mueller-Auer S."/>
            <person name="Gabel C."/>
            <person name="Fuchs M."/>
            <person name="Duesterhoeft A."/>
            <person name="Fritzc C."/>
            <person name="Holzer E."/>
            <person name="Moestl D."/>
            <person name="Hilbert H."/>
            <person name="Borzym K."/>
            <person name="Langer I."/>
            <person name="Beck A."/>
            <person name="Lehrach H."/>
            <person name="Reinhardt R."/>
            <person name="Pohl T.M."/>
            <person name="Eger P."/>
            <person name="Zimmermann W."/>
            <person name="Wedler H."/>
            <person name="Wambutt R."/>
            <person name="Purnelle B."/>
            <person name="Goffeau A."/>
            <person name="Cadieu E."/>
            <person name="Dreano S."/>
            <person name="Gloux S."/>
            <person name="Lelaure V."/>
            <person name="Mottier S."/>
            <person name="Galibert F."/>
            <person name="Aves S.J."/>
            <person name="Xiang Z."/>
            <person name="Hunt C."/>
            <person name="Moore K."/>
            <person name="Hurst S.M."/>
            <person name="Lucas M."/>
            <person name="Rochet M."/>
            <person name="Gaillardin C."/>
            <person name="Tallada V.A."/>
            <person name="Garzon A."/>
            <person name="Thode G."/>
            <person name="Daga R.R."/>
            <person name="Cruzado L."/>
            <person name="Jimenez J."/>
            <person name="Sanchez M."/>
            <person name="del Rey F."/>
            <person name="Benito J."/>
            <person name="Dominguez A."/>
            <person name="Revuelta J.L."/>
            <person name="Moreno S."/>
            <person name="Armstrong J."/>
            <person name="Forsburg S.L."/>
            <person name="Cerutti L."/>
            <person name="Lowe T."/>
            <person name="McCombie W.R."/>
            <person name="Paulsen I."/>
            <person name="Potashkin J."/>
            <person name="Shpakovski G.V."/>
            <person name="Ussery D."/>
            <person name="Barrell B.G."/>
            <person name="Nurse P."/>
        </authorList>
    </citation>
    <scope>NUCLEOTIDE SEQUENCE [LARGE SCALE GENOMIC DNA]</scope>
    <source>
        <strain>972 / ATCC 24843</strain>
    </source>
</reference>
<reference key="2">
    <citation type="journal article" date="2002" name="Science">
        <title>Regulation of heterochromatic silencing and histone H3 lysine-9 methylation by RNAi.</title>
        <authorList>
            <person name="Volpe T.A."/>
            <person name="Kidner C."/>
            <person name="Hall I.M."/>
            <person name="Teng G."/>
            <person name="Grewal S.I.S."/>
            <person name="Martienssen R.A."/>
        </authorList>
    </citation>
    <scope>FUNCTION</scope>
</reference>
<reference key="3">
    <citation type="journal article" date="2002" name="Science">
        <title>Establishment and maintenance of a heterochromatin domain.</title>
        <authorList>
            <person name="Hall I.M."/>
            <person name="Shankaranarayana G.D."/>
            <person name="Noma K."/>
            <person name="Ayoub N."/>
            <person name="Cohen A."/>
            <person name="Grewal S.I.S."/>
        </authorList>
    </citation>
    <scope>FUNCTION</scope>
</reference>
<reference key="4">
    <citation type="journal article" date="2003" name="Chromosome Res.">
        <title>RNA interference is required for normal centromere function in fission yeast.</title>
        <authorList>
            <person name="Volpe T."/>
            <person name="Schramke V."/>
            <person name="Hamilton G.L."/>
            <person name="White S.A."/>
            <person name="Teng G."/>
            <person name="Martienssen R.A."/>
            <person name="Allshire R.C."/>
        </authorList>
    </citation>
    <scope>FUNCTION</scope>
</reference>
<reference key="5">
    <citation type="journal article" date="2003" name="Proc. Natl. Acad. Sci. U.S.A.">
        <title>RNA interference machinery regulates chromosome dynamics during mitosis and meiosis in fission yeast.</title>
        <authorList>
            <person name="Hall I.M."/>
            <person name="Noma K."/>
            <person name="Grewal S.I.S."/>
        </authorList>
    </citation>
    <scope>FUNCTION</scope>
</reference>
<reference key="6">
    <citation type="journal article" date="2004" name="Cell">
        <title>Two RNAi complexes, RITS and RDRC, physically interact and localize to noncoding centromeric RNAs.</title>
        <authorList>
            <person name="Motamedi M.R."/>
            <person name="Verdel A."/>
            <person name="Colmenares S.U."/>
            <person name="Gerber S.A."/>
            <person name="Gygi S.P."/>
            <person name="Moazed D."/>
        </authorList>
    </citation>
    <scope>FUNCTION</scope>
    <scope>COMPOSITION OF THE RDRC AND RITS COMPLEXES</scope>
    <scope>INTERACTION WITH HRR1</scope>
    <scope>SUBCELLULAR LOCATION</scope>
    <scope>IDENTIFICATION BY MASS SPECTROMETRY</scope>
</reference>
<reference key="7">
    <citation type="journal article" date="2004" name="Genes Dev.">
        <title>A single Argonaute protein mediates both transcriptional and posttranscriptional silencing in Schizosaccharomyces pombe.</title>
        <authorList>
            <person name="Sigova A."/>
            <person name="Rhind N."/>
            <person name="Zamore P.D."/>
        </authorList>
    </citation>
    <scope>FUNCTION</scope>
</reference>
<reference key="8">
    <citation type="journal article" date="2004" name="Mol. Biol. Cell">
        <title>ago1 and dcr1, two core components of the RNA interference pathway, functionally diverge from rdp1 in regulating cell cycle events in Schizosaccharomyces pombe.</title>
        <authorList>
            <person name="Carmichael J.B."/>
            <person name="Provost P."/>
            <person name="Ekwall K."/>
            <person name="Hobman T.C."/>
        </authorList>
    </citation>
    <scope>FUNCTION</scope>
</reference>
<reference key="9">
    <citation type="journal article" date="2004" name="Science">
        <title>RNAi-mediated targeting of heterochromatin by the RITS complex.</title>
        <authorList>
            <person name="Verdel A."/>
            <person name="Jia S."/>
            <person name="Gerber S."/>
            <person name="Sugiyama T."/>
            <person name="Gygi S.P."/>
            <person name="Grewal S.I.S."/>
            <person name="Moazed D."/>
        </authorList>
    </citation>
    <scope>FUNCTION</scope>
    <scope>COMPOSITION OF THE RITS COMPLEX</scope>
</reference>
<reference key="10">
    <citation type="journal article" date="2006" name="Nat. Biotechnol.">
        <title>ORFeome cloning and global analysis of protein localization in the fission yeast Schizosaccharomyces pombe.</title>
        <authorList>
            <person name="Matsuyama A."/>
            <person name="Arai R."/>
            <person name="Yashiroda Y."/>
            <person name="Shirai A."/>
            <person name="Kamata A."/>
            <person name="Sekido S."/>
            <person name="Kobayashi Y."/>
            <person name="Hashimoto A."/>
            <person name="Hamamoto M."/>
            <person name="Hiraoka Y."/>
            <person name="Horinouchi S."/>
            <person name="Yoshida M."/>
        </authorList>
    </citation>
    <scope>SUBCELLULAR LOCATION [LARGE SCALE ANALYSIS]</scope>
</reference>
<reference key="11">
    <citation type="journal article" date="2006" name="Science">
        <title>Argonaute slicing is required for heterochromatic silencing and spreading.</title>
        <authorList>
            <person name="Irvine D.V."/>
            <person name="Zaratiegui M."/>
            <person name="Tolia N.H."/>
            <person name="Goto D.B."/>
            <person name="Chitwood D.H."/>
            <person name="Vaughn M.W."/>
            <person name="Joshua-Tor L."/>
            <person name="Martienssen R.A."/>
        </authorList>
    </citation>
    <scope>FUNCTION</scope>
    <scope>RNA CLEAVAGE ACTIVITY</scope>
    <scope>MUTAGENESIS OF ASP-580; ASP-651 AND HIS-788</scope>
</reference>
<reference key="12">
    <citation type="journal article" date="2007" name="Nat. Struct. Mol. Biol.">
        <title>Two different Argonaute complexes are required for siRNA generation and heterochromatin assembly in fission yeast.</title>
        <authorList>
            <person name="Buker S.M."/>
            <person name="Iida T."/>
            <person name="Buehler M."/>
            <person name="Villen J."/>
            <person name="Gygi S.P."/>
            <person name="Nakayama J."/>
            <person name="Moazed D."/>
        </authorList>
    </citation>
    <scope>FUNCTION</scope>
    <scope>INTERACTION WITH ARB1</scope>
    <scope>COMPOSITION OF THE ARC COMPLEX</scope>
    <scope>MUTAGENESIS OF PHE-276 AND ASP-580</scope>
</reference>